<protein>
    <recommendedName>
        <fullName evidence="1">Serine--tRNA ligase</fullName>
        <ecNumber evidence="1">6.1.1.11</ecNumber>
    </recommendedName>
    <alternativeName>
        <fullName evidence="1">Seryl-tRNA synthetase</fullName>
        <shortName evidence="1">SerRS</shortName>
    </alternativeName>
    <alternativeName>
        <fullName evidence="1">Seryl-tRNA(Ser/Sec) synthetase</fullName>
    </alternativeName>
</protein>
<name>SYS_STRZP</name>
<comment type="function">
    <text evidence="1">Catalyzes the attachment of serine to tRNA(Ser). Is also able to aminoacylate tRNA(Sec) with serine, to form the misacylated tRNA L-seryl-tRNA(Sec), which will be further converted into selenocysteinyl-tRNA(Sec).</text>
</comment>
<comment type="catalytic activity">
    <reaction evidence="1">
        <text>tRNA(Ser) + L-serine + ATP = L-seryl-tRNA(Ser) + AMP + diphosphate + H(+)</text>
        <dbReference type="Rhea" id="RHEA:12292"/>
        <dbReference type="Rhea" id="RHEA-COMP:9669"/>
        <dbReference type="Rhea" id="RHEA-COMP:9703"/>
        <dbReference type="ChEBI" id="CHEBI:15378"/>
        <dbReference type="ChEBI" id="CHEBI:30616"/>
        <dbReference type="ChEBI" id="CHEBI:33019"/>
        <dbReference type="ChEBI" id="CHEBI:33384"/>
        <dbReference type="ChEBI" id="CHEBI:78442"/>
        <dbReference type="ChEBI" id="CHEBI:78533"/>
        <dbReference type="ChEBI" id="CHEBI:456215"/>
        <dbReference type="EC" id="6.1.1.11"/>
    </reaction>
</comment>
<comment type="catalytic activity">
    <reaction evidence="1">
        <text>tRNA(Sec) + L-serine + ATP = L-seryl-tRNA(Sec) + AMP + diphosphate + H(+)</text>
        <dbReference type="Rhea" id="RHEA:42580"/>
        <dbReference type="Rhea" id="RHEA-COMP:9742"/>
        <dbReference type="Rhea" id="RHEA-COMP:10128"/>
        <dbReference type="ChEBI" id="CHEBI:15378"/>
        <dbReference type="ChEBI" id="CHEBI:30616"/>
        <dbReference type="ChEBI" id="CHEBI:33019"/>
        <dbReference type="ChEBI" id="CHEBI:33384"/>
        <dbReference type="ChEBI" id="CHEBI:78442"/>
        <dbReference type="ChEBI" id="CHEBI:78533"/>
        <dbReference type="ChEBI" id="CHEBI:456215"/>
        <dbReference type="EC" id="6.1.1.11"/>
    </reaction>
</comment>
<comment type="pathway">
    <text evidence="1">Aminoacyl-tRNA biosynthesis; selenocysteinyl-tRNA(Sec) biosynthesis; L-seryl-tRNA(Sec) from L-serine and tRNA(Sec): step 1/1.</text>
</comment>
<comment type="subunit">
    <text evidence="1">Homodimer. The tRNA molecule binds across the dimer.</text>
</comment>
<comment type="subcellular location">
    <subcellularLocation>
        <location evidence="1">Cytoplasm</location>
    </subcellularLocation>
</comment>
<comment type="domain">
    <text evidence="1">Consists of two distinct domains, a catalytic core and a N-terminal extension that is involved in tRNA binding.</text>
</comment>
<comment type="similarity">
    <text evidence="1">Belongs to the class-II aminoacyl-tRNA synthetase family. Type-1 seryl-tRNA synthetase subfamily.</text>
</comment>
<evidence type="ECO:0000255" key="1">
    <source>
        <dbReference type="HAMAP-Rule" id="MF_00176"/>
    </source>
</evidence>
<organism>
    <name type="scientific">Streptococcus pneumoniae (strain P1031)</name>
    <dbReference type="NCBI Taxonomy" id="488223"/>
    <lineage>
        <taxon>Bacteria</taxon>
        <taxon>Bacillati</taxon>
        <taxon>Bacillota</taxon>
        <taxon>Bacilli</taxon>
        <taxon>Lactobacillales</taxon>
        <taxon>Streptococcaceae</taxon>
        <taxon>Streptococcus</taxon>
    </lineage>
</organism>
<feature type="chain" id="PRO_1000199509" description="Serine--tRNA ligase">
    <location>
        <begin position="1"/>
        <end position="424"/>
    </location>
</feature>
<feature type="binding site" evidence="1">
    <location>
        <begin position="230"/>
        <end position="232"/>
    </location>
    <ligand>
        <name>L-serine</name>
        <dbReference type="ChEBI" id="CHEBI:33384"/>
    </ligand>
</feature>
<feature type="binding site" evidence="1">
    <location>
        <begin position="261"/>
        <end position="263"/>
    </location>
    <ligand>
        <name>ATP</name>
        <dbReference type="ChEBI" id="CHEBI:30616"/>
    </ligand>
</feature>
<feature type="binding site" evidence="1">
    <location>
        <position position="284"/>
    </location>
    <ligand>
        <name>L-serine</name>
        <dbReference type="ChEBI" id="CHEBI:33384"/>
    </ligand>
</feature>
<feature type="binding site" evidence="1">
    <location>
        <begin position="348"/>
        <end position="351"/>
    </location>
    <ligand>
        <name>ATP</name>
        <dbReference type="ChEBI" id="CHEBI:30616"/>
    </ligand>
</feature>
<feature type="binding site" evidence="1">
    <location>
        <position position="384"/>
    </location>
    <ligand>
        <name>L-serine</name>
        <dbReference type="ChEBI" id="CHEBI:33384"/>
    </ligand>
</feature>
<reference key="1">
    <citation type="journal article" date="2010" name="Genome Biol.">
        <title>Structure and dynamics of the pan-genome of Streptococcus pneumoniae and closely related species.</title>
        <authorList>
            <person name="Donati C."/>
            <person name="Hiller N.L."/>
            <person name="Tettelin H."/>
            <person name="Muzzi A."/>
            <person name="Croucher N.J."/>
            <person name="Angiuoli S.V."/>
            <person name="Oggioni M."/>
            <person name="Dunning Hotopp J.C."/>
            <person name="Hu F.Z."/>
            <person name="Riley D.R."/>
            <person name="Covacci A."/>
            <person name="Mitchell T.J."/>
            <person name="Bentley S.D."/>
            <person name="Kilian M."/>
            <person name="Ehrlich G.D."/>
            <person name="Rappuoli R."/>
            <person name="Moxon E.R."/>
            <person name="Masignani V."/>
        </authorList>
    </citation>
    <scope>NUCLEOTIDE SEQUENCE [LARGE SCALE GENOMIC DNA]</scope>
    <source>
        <strain>P1031</strain>
    </source>
</reference>
<accession>C1CIR2</accession>
<sequence length="424" mass="47664">MLDIKRIRTDFEAVAEKLATRGVDAAVLNEMKEIDAKRRNILVKVETLKAERNTVSAEIAQAKRNKENTDDKIAAMQNLSAEVKALDAELAEIDAKLTEFTTTLPNIPADSVPVGADEDDNVEVRRWGTPREFDFEPKAHWDLGEDLGILDWERGGKVTGARFLFYKGLGARLERAIYNFMLDEHGKEGYTEVITPYIVNHDSMFGTGQYPKFKEDTFELSDTNFVLIPTAEVPLANYYRDEILDGKDLPIYFTAMSPSFRSEAGSAGRDTRGLIRLHQFHKVEMVKFAKPEESYEELEKMTANAENILQKLNLPYRVVALSTGDMGFSAAKTYDLEVWIPAQNNYREISSCSNTEDFQARRAQIRYRDEADGKVKLLHTLNGSGLAVGRTVAAILENYQNEDGSVTIPEALRPYMGGAEVIKP</sequence>
<proteinExistence type="inferred from homology"/>
<dbReference type="EC" id="6.1.1.11" evidence="1"/>
<dbReference type="EMBL" id="CP000920">
    <property type="protein sequence ID" value="ACO21139.1"/>
    <property type="molecule type" value="Genomic_DNA"/>
</dbReference>
<dbReference type="RefSeq" id="WP_000884249.1">
    <property type="nucleotide sequence ID" value="NC_012467.1"/>
</dbReference>
<dbReference type="SMR" id="C1CIR2"/>
<dbReference type="GeneID" id="45652134"/>
<dbReference type="KEGG" id="spp:SPP_0442"/>
<dbReference type="HOGENOM" id="CLU_023797_1_1_9"/>
<dbReference type="UniPathway" id="UPA00906">
    <property type="reaction ID" value="UER00895"/>
</dbReference>
<dbReference type="GO" id="GO:0005737">
    <property type="term" value="C:cytoplasm"/>
    <property type="evidence" value="ECO:0007669"/>
    <property type="project" value="UniProtKB-SubCell"/>
</dbReference>
<dbReference type="GO" id="GO:0005524">
    <property type="term" value="F:ATP binding"/>
    <property type="evidence" value="ECO:0007669"/>
    <property type="project" value="UniProtKB-UniRule"/>
</dbReference>
<dbReference type="GO" id="GO:0140096">
    <property type="term" value="F:catalytic activity, acting on a protein"/>
    <property type="evidence" value="ECO:0007669"/>
    <property type="project" value="UniProtKB-ARBA"/>
</dbReference>
<dbReference type="GO" id="GO:0004828">
    <property type="term" value="F:serine-tRNA ligase activity"/>
    <property type="evidence" value="ECO:0007669"/>
    <property type="project" value="UniProtKB-UniRule"/>
</dbReference>
<dbReference type="GO" id="GO:0016740">
    <property type="term" value="F:transferase activity"/>
    <property type="evidence" value="ECO:0007669"/>
    <property type="project" value="UniProtKB-ARBA"/>
</dbReference>
<dbReference type="GO" id="GO:0016260">
    <property type="term" value="P:selenocysteine biosynthetic process"/>
    <property type="evidence" value="ECO:0007669"/>
    <property type="project" value="UniProtKB-UniRule"/>
</dbReference>
<dbReference type="GO" id="GO:0006434">
    <property type="term" value="P:seryl-tRNA aminoacylation"/>
    <property type="evidence" value="ECO:0007669"/>
    <property type="project" value="UniProtKB-UniRule"/>
</dbReference>
<dbReference type="CDD" id="cd00770">
    <property type="entry name" value="SerRS_core"/>
    <property type="match status" value="1"/>
</dbReference>
<dbReference type="Gene3D" id="3.30.930.10">
    <property type="entry name" value="Bira Bifunctional Protein, Domain 2"/>
    <property type="match status" value="1"/>
</dbReference>
<dbReference type="Gene3D" id="1.10.287.40">
    <property type="entry name" value="Serine-tRNA synthetase, tRNA binding domain"/>
    <property type="match status" value="1"/>
</dbReference>
<dbReference type="HAMAP" id="MF_00176">
    <property type="entry name" value="Ser_tRNA_synth_type1"/>
    <property type="match status" value="1"/>
</dbReference>
<dbReference type="InterPro" id="IPR002314">
    <property type="entry name" value="aa-tRNA-synt_IIb"/>
</dbReference>
<dbReference type="InterPro" id="IPR006195">
    <property type="entry name" value="aa-tRNA-synth_II"/>
</dbReference>
<dbReference type="InterPro" id="IPR045864">
    <property type="entry name" value="aa-tRNA-synth_II/BPL/LPL"/>
</dbReference>
<dbReference type="InterPro" id="IPR002317">
    <property type="entry name" value="Ser-tRNA-ligase_type_1"/>
</dbReference>
<dbReference type="InterPro" id="IPR015866">
    <property type="entry name" value="Ser-tRNA-synth_1_N"/>
</dbReference>
<dbReference type="InterPro" id="IPR042103">
    <property type="entry name" value="SerRS_1_N_sf"/>
</dbReference>
<dbReference type="InterPro" id="IPR033729">
    <property type="entry name" value="SerRS_core"/>
</dbReference>
<dbReference type="InterPro" id="IPR010978">
    <property type="entry name" value="tRNA-bd_arm"/>
</dbReference>
<dbReference type="NCBIfam" id="TIGR00414">
    <property type="entry name" value="serS"/>
    <property type="match status" value="1"/>
</dbReference>
<dbReference type="PANTHER" id="PTHR43697:SF1">
    <property type="entry name" value="SERINE--TRNA LIGASE"/>
    <property type="match status" value="1"/>
</dbReference>
<dbReference type="PANTHER" id="PTHR43697">
    <property type="entry name" value="SERYL-TRNA SYNTHETASE"/>
    <property type="match status" value="1"/>
</dbReference>
<dbReference type="Pfam" id="PF02403">
    <property type="entry name" value="Seryl_tRNA_N"/>
    <property type="match status" value="1"/>
</dbReference>
<dbReference type="Pfam" id="PF00587">
    <property type="entry name" value="tRNA-synt_2b"/>
    <property type="match status" value="1"/>
</dbReference>
<dbReference type="PIRSF" id="PIRSF001529">
    <property type="entry name" value="Ser-tRNA-synth_IIa"/>
    <property type="match status" value="1"/>
</dbReference>
<dbReference type="PRINTS" id="PR00981">
    <property type="entry name" value="TRNASYNTHSER"/>
</dbReference>
<dbReference type="SUPFAM" id="SSF55681">
    <property type="entry name" value="Class II aaRS and biotin synthetases"/>
    <property type="match status" value="1"/>
</dbReference>
<dbReference type="SUPFAM" id="SSF46589">
    <property type="entry name" value="tRNA-binding arm"/>
    <property type="match status" value="1"/>
</dbReference>
<dbReference type="PROSITE" id="PS50862">
    <property type="entry name" value="AA_TRNA_LIGASE_II"/>
    <property type="match status" value="1"/>
</dbReference>
<keyword id="KW-0030">Aminoacyl-tRNA synthetase</keyword>
<keyword id="KW-0067">ATP-binding</keyword>
<keyword id="KW-0963">Cytoplasm</keyword>
<keyword id="KW-0436">Ligase</keyword>
<keyword id="KW-0547">Nucleotide-binding</keyword>
<keyword id="KW-0648">Protein biosynthesis</keyword>
<gene>
    <name evidence="1" type="primary">serS</name>
    <name type="ordered locus">SPP_0442</name>
</gene>